<reference key="1">
    <citation type="journal article" date="2010" name="BMC Genomics">
        <title>Differential expression of genes in salivary glands of male Rhipicephalus (Boophilus)microplus in response to infection with Anaplasma marginale.</title>
        <authorList>
            <person name="Zivkovic Z."/>
            <person name="Esteves E."/>
            <person name="Almazan C."/>
            <person name="Daffre S."/>
            <person name="Nijhof A.M."/>
            <person name="Kocan K.M."/>
            <person name="Jongejan F."/>
            <person name="de la Fuente J."/>
        </authorList>
    </citation>
    <scope>NUCLEOTIDE SEQUENCE [MRNA]</scope>
    <source>
        <tissue>Salivary gland</tissue>
    </source>
</reference>
<reference evidence="7 8" key="2">
    <citation type="journal article" date="2016" name="Nat. Struct. Mol. Biol.">
        <title>Structural basis for therapeutic inhibition of complement C5.</title>
        <authorList>
            <person name="Jore M.M."/>
            <person name="Johnson S."/>
            <person name="Sheppard D."/>
            <person name="Barber N.M."/>
            <person name="Li Y.I."/>
            <person name="Nunn M.A."/>
            <person name="Elmlund H."/>
            <person name="Lea S.M."/>
        </authorList>
    </citation>
    <scope>X-RAY CRYSTALLOGRAPHY (2.98 ANGSTROMS) OF 22-98 IN COMPLEX WITH HUMAN COMPLEMENT C5 AND THE TICK COMPLEMENT INHBIBITOR OMCI</scope>
    <scope>STRUCTURE BY NMR OF 22-88</scope>
    <scope>FUNCTION</scope>
    <scope>DISULFIDE BONDS</scope>
    <scope>MUTAGENESIS OF 22-GLU--VAL-31 AND 87-THR--GLU-98</scope>
    <source>
        <tissue>Salivary gland</tissue>
    </source>
</reference>
<evidence type="ECO:0000250" key="1">
    <source>
        <dbReference type="UniProtKB" id="A0A146B485"/>
    </source>
</evidence>
<evidence type="ECO:0000255" key="2"/>
<evidence type="ECO:0000269" key="3">
    <source>
    </source>
</evidence>
<evidence type="ECO:0000303" key="4">
    <source>
    </source>
</evidence>
<evidence type="ECO:0000305" key="5"/>
<evidence type="ECO:0000305" key="6">
    <source>
    </source>
</evidence>
<evidence type="ECO:0000312" key="7">
    <source>
        <dbReference type="PDB" id="5HCD"/>
    </source>
</evidence>
<evidence type="ECO:0000312" key="8">
    <source>
        <dbReference type="PDB" id="5IEC"/>
    </source>
</evidence>
<evidence type="ECO:0007744" key="9">
    <source>
        <dbReference type="PDB" id="5HCD"/>
    </source>
</evidence>
<evidence type="ECO:0007744" key="10">
    <source>
        <dbReference type="PDB" id="5IEC"/>
    </source>
</evidence>
<evidence type="ECO:0007829" key="11">
    <source>
        <dbReference type="PDB" id="5HCD"/>
    </source>
</evidence>
<evidence type="ECO:0007829" key="12">
    <source>
        <dbReference type="PDB" id="5IEC"/>
    </source>
</evidence>
<keyword id="KW-0002">3D-structure</keyword>
<keyword id="KW-1216">Complement system impairing toxin</keyword>
<keyword id="KW-1015">Disulfide bond</keyword>
<keyword id="KW-0964">Secreted</keyword>
<keyword id="KW-0732">Signal</keyword>
<keyword id="KW-0800">Toxin</keyword>
<accession>A0A158RFT4</accession>
<accession>A0A182DWE4</accession>
<organism>
    <name type="scientific">Rhipicephalus microplus</name>
    <name type="common">Cattle tick</name>
    <name type="synonym">Boophilus microplus</name>
    <dbReference type="NCBI Taxonomy" id="6941"/>
    <lineage>
        <taxon>Eukaryota</taxon>
        <taxon>Metazoa</taxon>
        <taxon>Ecdysozoa</taxon>
        <taxon>Arthropoda</taxon>
        <taxon>Chelicerata</taxon>
        <taxon>Arachnida</taxon>
        <taxon>Acari</taxon>
        <taxon>Parasitiformes</taxon>
        <taxon>Ixodida</taxon>
        <taxon>Ixodoidea</taxon>
        <taxon>Ixodidae</taxon>
        <taxon>Rhipicephalinae</taxon>
        <taxon>Rhipicephalus</taxon>
        <taxon>Boophilus</taxon>
    </lineage>
</organism>
<dbReference type="EMBL" id="GO496246">
    <property type="status" value="NOT_ANNOTATED_CDS"/>
    <property type="molecule type" value="mRNA"/>
</dbReference>
<dbReference type="EMBL" id="GO496255">
    <property type="status" value="NOT_ANNOTATED_CDS"/>
    <property type="molecule type" value="mRNA"/>
</dbReference>
<dbReference type="PDB" id="5HCD">
    <property type="method" value="X-ray"/>
    <property type="resolution" value="2.98 A"/>
    <property type="chains" value="D=22-98"/>
</dbReference>
<dbReference type="PDB" id="5IEC">
    <property type="method" value="NMR"/>
    <property type="chains" value="A=22-88"/>
</dbReference>
<dbReference type="PDBsum" id="5HCD"/>
<dbReference type="PDBsum" id="5IEC"/>
<dbReference type="SMR" id="A0A158RFT4"/>
<dbReference type="GO" id="GO:0005576">
    <property type="term" value="C:extracellular region"/>
    <property type="evidence" value="ECO:0007669"/>
    <property type="project" value="UniProtKB-SubCell"/>
</dbReference>
<dbReference type="GO" id="GO:0090729">
    <property type="term" value="F:toxin activity"/>
    <property type="evidence" value="ECO:0007669"/>
    <property type="project" value="UniProtKB-KW"/>
</dbReference>
<dbReference type="CDD" id="cd22951">
    <property type="entry name" value="C5_RaCI-like"/>
    <property type="match status" value="1"/>
</dbReference>
<name>C5I2_RHIMP</name>
<comment type="function">
    <text evidence="1 3">Complement inhibitor (PubMed:27018802). Prevents complement-mediated C5 activation by binding to C5 (PubMed:27018802). Binds C5 at a different binding site than the other tick complement inhibitors OmCI and CirpT1, and the drug eculizumab (By similarity).</text>
</comment>
<comment type="subcellular location">
    <subcellularLocation>
        <location evidence="6">Secreted</location>
    </subcellularLocation>
</comment>
<comment type="tissue specificity">
    <text evidence="6">Expressed in salivary glands.</text>
</comment>
<comment type="similarity">
    <text evidence="5">Belongs to the RaCI family.</text>
</comment>
<proteinExistence type="evidence at protein level"/>
<feature type="signal peptide" evidence="2">
    <location>
        <begin position="1"/>
        <end position="21"/>
    </location>
</feature>
<feature type="chain" id="PRO_0000456230" description="Complement inhibitor RaCI2">
    <location>
        <begin position="22"/>
        <end position="98"/>
    </location>
</feature>
<feature type="disulfide bond" evidence="3 9 10">
    <location>
        <begin position="35"/>
        <end position="59"/>
    </location>
</feature>
<feature type="disulfide bond" evidence="3 9 10">
    <location>
        <begin position="40"/>
        <end position="61"/>
    </location>
</feature>
<feature type="disulfide bond" evidence="3 9 10">
    <location>
        <begin position="55"/>
        <end position="76"/>
    </location>
</feature>
<feature type="mutagenesis site" description="No change in activity." evidence="3">
    <location>
        <begin position="22"/>
        <end position="31"/>
    </location>
</feature>
<feature type="mutagenesis site" description="No change in activity." evidence="3">
    <location>
        <begin position="87"/>
        <end position="98"/>
    </location>
</feature>
<feature type="helix" evidence="12">
    <location>
        <begin position="23"/>
        <end position="26"/>
    </location>
</feature>
<feature type="strand" evidence="11">
    <location>
        <begin position="35"/>
        <end position="37"/>
    </location>
</feature>
<feature type="strand" evidence="11">
    <location>
        <begin position="39"/>
        <end position="44"/>
    </location>
</feature>
<feature type="strand" evidence="11">
    <location>
        <begin position="50"/>
        <end position="54"/>
    </location>
</feature>
<feature type="strand" evidence="11">
    <location>
        <begin position="60"/>
        <end position="63"/>
    </location>
</feature>
<feature type="strand" evidence="11">
    <location>
        <begin position="72"/>
        <end position="77"/>
    </location>
</feature>
<protein>
    <recommendedName>
        <fullName evidence="4">Complement inhibitor RaCI2</fullName>
    </recommendedName>
</protein>
<sequence length="98" mass="10633">MNAVTVLAFTAFALIVHDCYSEEANTTPISVKDQCANVTCRRTVDNRGKRHIDGCPPGCLCVLKGPDSKDNLDGTCYLLATTPKSTTTSTEQSFNMEE</sequence>